<feature type="chain" id="PRO_1000193952" description="Large ribosomal subunit protein bL20">
    <location>
        <begin position="1"/>
        <end position="127"/>
    </location>
</feature>
<gene>
    <name evidence="1" type="primary">rplT</name>
    <name type="ordered locus">cauri_1358</name>
</gene>
<protein>
    <recommendedName>
        <fullName evidence="1">Large ribosomal subunit protein bL20</fullName>
    </recommendedName>
    <alternativeName>
        <fullName evidence="2">50S ribosomal protein L20</fullName>
    </alternativeName>
</protein>
<evidence type="ECO:0000255" key="1">
    <source>
        <dbReference type="HAMAP-Rule" id="MF_00382"/>
    </source>
</evidence>
<evidence type="ECO:0000305" key="2"/>
<reference key="1">
    <citation type="journal article" date="2010" name="BMC Genomics">
        <title>Complete genome sequence and lifestyle of black-pigmented Corynebacterium aurimucosum ATCC 700975 (formerly C. nigricans CN-1) isolated from a vaginal swab of a woman with spontaneous abortion.</title>
        <authorList>
            <person name="Trost E."/>
            <person name="Gotker S."/>
            <person name="Schneider J."/>
            <person name="Schneiker-Bekel S."/>
            <person name="Szczepanowski R."/>
            <person name="Tilker A."/>
            <person name="Viehoever P."/>
            <person name="Arnold W."/>
            <person name="Bekel T."/>
            <person name="Blom J."/>
            <person name="Gartemann K.H."/>
            <person name="Linke B."/>
            <person name="Goesmann A."/>
            <person name="Puhler A."/>
            <person name="Shukla S.K."/>
            <person name="Tauch A."/>
        </authorList>
    </citation>
    <scope>NUCLEOTIDE SEQUENCE [LARGE SCALE GENOMIC DNA]</scope>
    <source>
        <strain>ATCC 700975 / DSM 44827 / CIP 107346 / CN-1</strain>
    </source>
</reference>
<comment type="function">
    <text evidence="1">Binds directly to 23S ribosomal RNA and is necessary for the in vitro assembly process of the 50S ribosomal subunit. It is not involved in the protein synthesizing functions of that subunit.</text>
</comment>
<comment type="similarity">
    <text evidence="1">Belongs to the bacterial ribosomal protein bL20 family.</text>
</comment>
<proteinExistence type="inferred from homology"/>
<name>RL20_CORA7</name>
<sequence length="127" mass="14760">MARVKRSVNAKKKRRAILKSAKGYRGQRSRLYRKAKEQWLHSMTYAYRDRRARKSEFRKLWIQRINAAARMNDITYNRLIHGLRLAEIEVDRKILAELAVNDFEAFSALCEAAKAALPEDVNAPKAA</sequence>
<organism>
    <name type="scientific">Corynebacterium aurimucosum (strain ATCC 700975 / DSM 44827 / CIP 107346 / CN-1)</name>
    <name type="common">Corynebacterium nigricans</name>
    <dbReference type="NCBI Taxonomy" id="548476"/>
    <lineage>
        <taxon>Bacteria</taxon>
        <taxon>Bacillati</taxon>
        <taxon>Actinomycetota</taxon>
        <taxon>Actinomycetes</taxon>
        <taxon>Mycobacteriales</taxon>
        <taxon>Corynebacteriaceae</taxon>
        <taxon>Corynebacterium</taxon>
    </lineage>
</organism>
<accession>C3PGJ7</accession>
<dbReference type="EMBL" id="CP001601">
    <property type="protein sequence ID" value="ACP32951.1"/>
    <property type="molecule type" value="Genomic_DNA"/>
</dbReference>
<dbReference type="RefSeq" id="WP_005323264.1">
    <property type="nucleotide sequence ID" value="NZ_ACLH01000081.1"/>
</dbReference>
<dbReference type="SMR" id="C3PGJ7"/>
<dbReference type="STRING" id="548476.cauri_1358"/>
<dbReference type="GeneID" id="92746254"/>
<dbReference type="KEGG" id="car:cauri_1358"/>
<dbReference type="eggNOG" id="COG0292">
    <property type="taxonomic scope" value="Bacteria"/>
</dbReference>
<dbReference type="HOGENOM" id="CLU_123265_0_0_11"/>
<dbReference type="OrthoDB" id="9808966at2"/>
<dbReference type="Proteomes" id="UP000002077">
    <property type="component" value="Chromosome"/>
</dbReference>
<dbReference type="GO" id="GO:1990904">
    <property type="term" value="C:ribonucleoprotein complex"/>
    <property type="evidence" value="ECO:0007669"/>
    <property type="project" value="UniProtKB-KW"/>
</dbReference>
<dbReference type="GO" id="GO:0005840">
    <property type="term" value="C:ribosome"/>
    <property type="evidence" value="ECO:0007669"/>
    <property type="project" value="UniProtKB-KW"/>
</dbReference>
<dbReference type="GO" id="GO:0019843">
    <property type="term" value="F:rRNA binding"/>
    <property type="evidence" value="ECO:0007669"/>
    <property type="project" value="UniProtKB-UniRule"/>
</dbReference>
<dbReference type="GO" id="GO:0003735">
    <property type="term" value="F:structural constituent of ribosome"/>
    <property type="evidence" value="ECO:0007669"/>
    <property type="project" value="InterPro"/>
</dbReference>
<dbReference type="GO" id="GO:0000027">
    <property type="term" value="P:ribosomal large subunit assembly"/>
    <property type="evidence" value="ECO:0007669"/>
    <property type="project" value="UniProtKB-UniRule"/>
</dbReference>
<dbReference type="GO" id="GO:0006412">
    <property type="term" value="P:translation"/>
    <property type="evidence" value="ECO:0007669"/>
    <property type="project" value="InterPro"/>
</dbReference>
<dbReference type="CDD" id="cd07026">
    <property type="entry name" value="Ribosomal_L20"/>
    <property type="match status" value="1"/>
</dbReference>
<dbReference type="FunFam" id="1.10.1900.20:FF:000001">
    <property type="entry name" value="50S ribosomal protein L20"/>
    <property type="match status" value="1"/>
</dbReference>
<dbReference type="Gene3D" id="6.10.160.10">
    <property type="match status" value="1"/>
</dbReference>
<dbReference type="Gene3D" id="1.10.1900.20">
    <property type="entry name" value="Ribosomal protein L20"/>
    <property type="match status" value="1"/>
</dbReference>
<dbReference type="HAMAP" id="MF_00382">
    <property type="entry name" value="Ribosomal_bL20"/>
    <property type="match status" value="1"/>
</dbReference>
<dbReference type="InterPro" id="IPR005813">
    <property type="entry name" value="Ribosomal_bL20"/>
</dbReference>
<dbReference type="InterPro" id="IPR049946">
    <property type="entry name" value="RIBOSOMAL_L20_CS"/>
</dbReference>
<dbReference type="InterPro" id="IPR035566">
    <property type="entry name" value="Ribosomal_protein_bL20_C"/>
</dbReference>
<dbReference type="NCBIfam" id="TIGR01032">
    <property type="entry name" value="rplT_bact"/>
    <property type="match status" value="1"/>
</dbReference>
<dbReference type="PANTHER" id="PTHR10986">
    <property type="entry name" value="39S RIBOSOMAL PROTEIN L20"/>
    <property type="match status" value="1"/>
</dbReference>
<dbReference type="Pfam" id="PF00453">
    <property type="entry name" value="Ribosomal_L20"/>
    <property type="match status" value="1"/>
</dbReference>
<dbReference type="PRINTS" id="PR00062">
    <property type="entry name" value="RIBOSOMALL20"/>
</dbReference>
<dbReference type="SUPFAM" id="SSF74731">
    <property type="entry name" value="Ribosomal protein L20"/>
    <property type="match status" value="1"/>
</dbReference>
<dbReference type="PROSITE" id="PS00937">
    <property type="entry name" value="RIBOSOMAL_L20"/>
    <property type="match status" value="1"/>
</dbReference>
<keyword id="KW-1185">Reference proteome</keyword>
<keyword id="KW-0687">Ribonucleoprotein</keyword>
<keyword id="KW-0689">Ribosomal protein</keyword>
<keyword id="KW-0694">RNA-binding</keyword>
<keyword id="KW-0699">rRNA-binding</keyword>